<accession>Q1G3Y4</accession>
<accession>A0MDJ5</accession>
<reference key="1">
    <citation type="journal article" date="2000" name="Nature">
        <title>Sequence and analysis of chromosome 1 of the plant Arabidopsis thaliana.</title>
        <authorList>
            <person name="Theologis A."/>
            <person name="Ecker J.R."/>
            <person name="Palm C.J."/>
            <person name="Federspiel N.A."/>
            <person name="Kaul S."/>
            <person name="White O."/>
            <person name="Alonso J."/>
            <person name="Altafi H."/>
            <person name="Araujo R."/>
            <person name="Bowman C.L."/>
            <person name="Brooks S.Y."/>
            <person name="Buehler E."/>
            <person name="Chan A."/>
            <person name="Chao Q."/>
            <person name="Chen H."/>
            <person name="Cheuk R.F."/>
            <person name="Chin C.W."/>
            <person name="Chung M.K."/>
            <person name="Conn L."/>
            <person name="Conway A.B."/>
            <person name="Conway A.R."/>
            <person name="Creasy T.H."/>
            <person name="Dewar K."/>
            <person name="Dunn P."/>
            <person name="Etgu P."/>
            <person name="Feldblyum T.V."/>
            <person name="Feng J.-D."/>
            <person name="Fong B."/>
            <person name="Fujii C.Y."/>
            <person name="Gill J.E."/>
            <person name="Goldsmith A.D."/>
            <person name="Haas B."/>
            <person name="Hansen N.F."/>
            <person name="Hughes B."/>
            <person name="Huizar L."/>
            <person name="Hunter J.L."/>
            <person name="Jenkins J."/>
            <person name="Johnson-Hopson C."/>
            <person name="Khan S."/>
            <person name="Khaykin E."/>
            <person name="Kim C.J."/>
            <person name="Koo H.L."/>
            <person name="Kremenetskaia I."/>
            <person name="Kurtz D.B."/>
            <person name="Kwan A."/>
            <person name="Lam B."/>
            <person name="Langin-Hooper S."/>
            <person name="Lee A."/>
            <person name="Lee J.M."/>
            <person name="Lenz C.A."/>
            <person name="Li J.H."/>
            <person name="Li Y.-P."/>
            <person name="Lin X."/>
            <person name="Liu S.X."/>
            <person name="Liu Z.A."/>
            <person name="Luros J.S."/>
            <person name="Maiti R."/>
            <person name="Marziali A."/>
            <person name="Militscher J."/>
            <person name="Miranda M."/>
            <person name="Nguyen M."/>
            <person name="Nierman W.C."/>
            <person name="Osborne B.I."/>
            <person name="Pai G."/>
            <person name="Peterson J."/>
            <person name="Pham P.K."/>
            <person name="Rizzo M."/>
            <person name="Rooney T."/>
            <person name="Rowley D."/>
            <person name="Sakano H."/>
            <person name="Salzberg S.L."/>
            <person name="Schwartz J.R."/>
            <person name="Shinn P."/>
            <person name="Southwick A.M."/>
            <person name="Sun H."/>
            <person name="Tallon L.J."/>
            <person name="Tambunga G."/>
            <person name="Toriumi M.J."/>
            <person name="Town C.D."/>
            <person name="Utterback T."/>
            <person name="Van Aken S."/>
            <person name="Vaysberg M."/>
            <person name="Vysotskaia V.S."/>
            <person name="Walker M."/>
            <person name="Wu D."/>
            <person name="Yu G."/>
            <person name="Fraser C.M."/>
            <person name="Venter J.C."/>
            <person name="Davis R.W."/>
        </authorList>
    </citation>
    <scope>NUCLEOTIDE SEQUENCE [LARGE SCALE GENOMIC DNA]</scope>
    <source>
        <strain>cv. Columbia</strain>
    </source>
</reference>
<reference key="2">
    <citation type="journal article" date="2017" name="Plant J.">
        <title>Araport11: a complete reannotation of the Arabidopsis thaliana reference genome.</title>
        <authorList>
            <person name="Cheng C.Y."/>
            <person name="Krishnakumar V."/>
            <person name="Chan A.P."/>
            <person name="Thibaud-Nissen F."/>
            <person name="Schobel S."/>
            <person name="Town C.D."/>
        </authorList>
    </citation>
    <scope>GENOME REANNOTATION</scope>
    <source>
        <strain>cv. Columbia</strain>
    </source>
</reference>
<reference key="3">
    <citation type="journal article" date="2006" name="Plant Biotechnol. J.">
        <title>Simultaneous high-throughput recombinational cloning of open reading frames in closed and open configurations.</title>
        <authorList>
            <person name="Underwood B.A."/>
            <person name="Vanderhaeghen R."/>
            <person name="Whitford R."/>
            <person name="Town C.D."/>
            <person name="Hilson P."/>
        </authorList>
    </citation>
    <scope>NUCLEOTIDE SEQUENCE [LARGE SCALE GENOMIC DNA]</scope>
    <source>
        <strain>cv. Columbia</strain>
    </source>
</reference>
<reference key="4">
    <citation type="journal article" date="2015" name="Plant Cell">
        <title>Functional conservation in the SIAMESE-RELATED family of cyclin-dependent kinase inhibitors in land plants.</title>
        <authorList>
            <person name="Kumar N."/>
            <person name="Harashima H."/>
            <person name="Kalve S."/>
            <person name="Bramsiepe J."/>
            <person name="Wang K."/>
            <person name="Sizani B.L."/>
            <person name="Bertrand L.L."/>
            <person name="Johnson M.C."/>
            <person name="Faulk C."/>
            <person name="Dale R."/>
            <person name="Simmons L.A."/>
            <person name="Churchman M.L."/>
            <person name="Sugimoto K."/>
            <person name="Kato N."/>
            <person name="Dasanayake M."/>
            <person name="Beemster G."/>
            <person name="Schnittger A."/>
            <person name="Larkin J.C."/>
        </authorList>
    </citation>
    <scope>GENE FAMILY</scope>
    <scope>NOMENCLATURE</scope>
</reference>
<feature type="chain" id="PRO_0000438474" description="Cyclin-dependent protein kinase inhibitor SMR15">
    <location>
        <begin position="1"/>
        <end position="106"/>
    </location>
</feature>
<keyword id="KW-0131">Cell cycle</keyword>
<keyword id="KW-0649">Protein kinase inhibitor</keyword>
<keyword id="KW-1185">Reference proteome</keyword>
<protein>
    <recommendedName>
        <fullName evidence="2">Cyclin-dependent protein kinase inhibitor SMR15</fullName>
    </recommendedName>
    <alternativeName>
        <fullName evidence="2">Protein SIAMESE-RELATED 15</fullName>
    </alternativeName>
</protein>
<gene>
    <name evidence="2" type="primary">SMR15</name>
    <name evidence="4" type="ordered locus">At1g60783</name>
    <name evidence="6" type="ORF">F8A5</name>
</gene>
<name>SMR15_ARATH</name>
<dbReference type="EMBL" id="AC002292">
    <property type="status" value="NOT_ANNOTATED_CDS"/>
    <property type="molecule type" value="Genomic_DNA"/>
</dbReference>
<dbReference type="EMBL" id="CP002684">
    <property type="protein sequence ID" value="AEE33732.1"/>
    <property type="molecule type" value="Genomic_DNA"/>
</dbReference>
<dbReference type="EMBL" id="DQ487450">
    <property type="protein sequence ID" value="ABF59303.1"/>
    <property type="molecule type" value="Genomic_DNA"/>
</dbReference>
<dbReference type="EMBL" id="DQ652611">
    <property type="protein sequence ID" value="ABK27997.1"/>
    <property type="status" value="ALT_SEQ"/>
    <property type="molecule type" value="Genomic_DNA"/>
</dbReference>
<dbReference type="RefSeq" id="NP_001117521.1">
    <property type="nucleotide sequence ID" value="NM_001124049.1"/>
</dbReference>
<dbReference type="PaxDb" id="3702-AT1G60783.1"/>
<dbReference type="EnsemblPlants" id="AT1G60783.1">
    <property type="protein sequence ID" value="AT1G60783.1"/>
    <property type="gene ID" value="AT1G60783"/>
</dbReference>
<dbReference type="GeneID" id="6240271"/>
<dbReference type="Gramene" id="AT1G60783.1">
    <property type="protein sequence ID" value="AT1G60783.1"/>
    <property type="gene ID" value="AT1G60783"/>
</dbReference>
<dbReference type="KEGG" id="ath:AT1G60783"/>
<dbReference type="Araport" id="AT1G60783"/>
<dbReference type="TAIR" id="AT1G60783"/>
<dbReference type="HOGENOM" id="CLU_2226943_0_0_1"/>
<dbReference type="InParanoid" id="Q1G3Y4"/>
<dbReference type="OMA" id="NVEHHET"/>
<dbReference type="PhylomeDB" id="Q1G3Y4"/>
<dbReference type="PRO" id="PR:Q1G3Y4"/>
<dbReference type="Proteomes" id="UP000006548">
    <property type="component" value="Chromosome 1"/>
</dbReference>
<dbReference type="GO" id="GO:0004860">
    <property type="term" value="F:protein kinase inhibitor activity"/>
    <property type="evidence" value="ECO:0007669"/>
    <property type="project" value="UniProtKB-KW"/>
</dbReference>
<dbReference type="GO" id="GO:0032875">
    <property type="term" value="P:regulation of DNA endoreduplication"/>
    <property type="evidence" value="ECO:0007669"/>
    <property type="project" value="InterPro"/>
</dbReference>
<dbReference type="InterPro" id="IPR040389">
    <property type="entry name" value="SMR"/>
</dbReference>
<dbReference type="PANTHER" id="PTHR33142">
    <property type="entry name" value="CYCLIN-DEPENDENT PROTEIN KINASE INHIBITOR SMR13"/>
    <property type="match status" value="1"/>
</dbReference>
<dbReference type="PANTHER" id="PTHR33142:SF48">
    <property type="entry name" value="CYCLIN-DEPENDENT PROTEIN KINASE INHIBITOR SMR15"/>
    <property type="match status" value="1"/>
</dbReference>
<organism evidence="5">
    <name type="scientific">Arabidopsis thaliana</name>
    <name type="common">Mouse-ear cress</name>
    <dbReference type="NCBI Taxonomy" id="3702"/>
    <lineage>
        <taxon>Eukaryota</taxon>
        <taxon>Viridiplantae</taxon>
        <taxon>Streptophyta</taxon>
        <taxon>Embryophyta</taxon>
        <taxon>Tracheophyta</taxon>
        <taxon>Spermatophyta</taxon>
        <taxon>Magnoliopsida</taxon>
        <taxon>eudicotyledons</taxon>
        <taxon>Gunneridae</taxon>
        <taxon>Pentapetalae</taxon>
        <taxon>rosids</taxon>
        <taxon>malvids</taxon>
        <taxon>Brassicales</taxon>
        <taxon>Brassicaceae</taxon>
        <taxon>Camelineae</taxon>
        <taxon>Arabidopsis</taxon>
    </lineage>
</organism>
<sequence length="106" mass="11711">MGFSGKTYHQFDRKFSETTEGKKCVITGISLHSTVKPISLSSSAVSNTEDEDLCPTTPTADSVRIPTVIPCPPAPKKRKLTLKVSYGPREFFSPPDLETVFIYRTT</sequence>
<comment type="function">
    <text evidence="1">Probable cyclin-dependent protein kinase (CDK) inhibitor that functions as a repressor of mitosis in the endoreduplication cell cycle.</text>
</comment>
<comment type="sequence caution" evidence="3">
    <conflict type="erroneous termination">
        <sequence resource="EMBL-CDS" id="ABK27997"/>
    </conflict>
    <text>Extended C-terminus.</text>
</comment>
<proteinExistence type="inferred from homology"/>
<evidence type="ECO:0000250" key="1">
    <source>
        <dbReference type="UniProtKB" id="Q9LZ78"/>
    </source>
</evidence>
<evidence type="ECO:0000303" key="2">
    <source>
    </source>
</evidence>
<evidence type="ECO:0000305" key="3"/>
<evidence type="ECO:0000312" key="4">
    <source>
        <dbReference type="Araport" id="AT1G60783"/>
    </source>
</evidence>
<evidence type="ECO:0000312" key="5">
    <source>
        <dbReference type="EMBL" id="ABF59303.1"/>
    </source>
</evidence>
<evidence type="ECO:0000312" key="6">
    <source>
        <dbReference type="EMBL" id="AC002292"/>
    </source>
</evidence>